<feature type="chain" id="PRO_0000406731" description="Pentafunctional AROM polypeptide">
    <location>
        <begin position="1"/>
        <end position="1586"/>
    </location>
</feature>
<feature type="region of interest" description="3-dehydroquinate synthase">
    <location>
        <begin position="1"/>
        <end position="384"/>
    </location>
</feature>
<feature type="region of interest" description="EPSP synthase">
    <location>
        <begin position="397"/>
        <end position="842"/>
    </location>
</feature>
<feature type="region of interest" description="Shikimate kinase">
    <location>
        <begin position="864"/>
        <end position="1056"/>
    </location>
</feature>
<feature type="region of interest" description="3-dehydroquinase">
    <location>
        <begin position="1057"/>
        <end position="1277"/>
    </location>
</feature>
<feature type="region of interest" description="Shikimate dehydrogenase">
    <location>
        <begin position="1290"/>
        <end position="1586"/>
    </location>
</feature>
<feature type="active site" description="Proton acceptor; for 3-dehydroquinate synthase activity" evidence="1">
    <location>
        <position position="260"/>
    </location>
</feature>
<feature type="active site" description="Proton acceptor; for 3-dehydroquinate synthase activity" evidence="1">
    <location>
        <position position="275"/>
    </location>
</feature>
<feature type="active site" description="For EPSP synthase activity" evidence="1">
    <location>
        <position position="824"/>
    </location>
</feature>
<feature type="active site" description="Proton acceptor; for 3-dehydroquinate dehydratase activity" evidence="1">
    <location>
        <position position="1180"/>
    </location>
</feature>
<feature type="active site" description="Schiff-base intermediate with substrate; for 3-dehydroquinate dehydratase activity" evidence="1">
    <location>
        <position position="1208"/>
    </location>
</feature>
<feature type="binding site" evidence="1">
    <location>
        <begin position="44"/>
        <end position="46"/>
    </location>
    <ligand>
        <name>NAD(+)</name>
        <dbReference type="ChEBI" id="CHEBI:57540"/>
    </ligand>
</feature>
<feature type="binding site" evidence="1">
    <location>
        <begin position="81"/>
        <end position="84"/>
    </location>
    <ligand>
        <name>NAD(+)</name>
        <dbReference type="ChEBI" id="CHEBI:57540"/>
    </ligand>
</feature>
<feature type="binding site" evidence="1">
    <location>
        <begin position="114"/>
        <end position="116"/>
    </location>
    <ligand>
        <name>NAD(+)</name>
        <dbReference type="ChEBI" id="CHEBI:57540"/>
    </ligand>
</feature>
<feature type="binding site" evidence="1">
    <location>
        <position position="119"/>
    </location>
    <ligand>
        <name>NAD(+)</name>
        <dbReference type="ChEBI" id="CHEBI:57540"/>
    </ligand>
</feature>
<feature type="binding site" evidence="1">
    <location>
        <position position="130"/>
    </location>
    <ligand>
        <name>7-phospho-2-dehydro-3-deoxy-D-arabino-heptonate</name>
        <dbReference type="ChEBI" id="CHEBI:58394"/>
    </ligand>
</feature>
<feature type="binding site" evidence="1">
    <location>
        <begin position="139"/>
        <end position="140"/>
    </location>
    <ligand>
        <name>NAD(+)</name>
        <dbReference type="ChEBI" id="CHEBI:57540"/>
    </ligand>
</feature>
<feature type="binding site" evidence="1">
    <location>
        <position position="146"/>
    </location>
    <ligand>
        <name>7-phospho-2-dehydro-3-deoxy-D-arabino-heptonate</name>
        <dbReference type="ChEBI" id="CHEBI:58394"/>
    </ligand>
</feature>
<feature type="binding site" evidence="1">
    <location>
        <position position="152"/>
    </location>
    <ligand>
        <name>7-phospho-2-dehydro-3-deoxy-D-arabino-heptonate</name>
        <dbReference type="ChEBI" id="CHEBI:58394"/>
    </ligand>
</feature>
<feature type="binding site" evidence="1">
    <location>
        <position position="161"/>
    </location>
    <ligand>
        <name>NAD(+)</name>
        <dbReference type="ChEBI" id="CHEBI:57540"/>
    </ligand>
</feature>
<feature type="binding site" evidence="1">
    <location>
        <position position="162"/>
    </location>
    <ligand>
        <name>7-phospho-2-dehydro-3-deoxy-D-arabino-heptonate</name>
        <dbReference type="ChEBI" id="CHEBI:58394"/>
    </ligand>
</feature>
<feature type="binding site" evidence="1">
    <location>
        <begin position="179"/>
        <end position="182"/>
    </location>
    <ligand>
        <name>NAD(+)</name>
        <dbReference type="ChEBI" id="CHEBI:57540"/>
    </ligand>
</feature>
<feature type="binding site" evidence="1">
    <location>
        <position position="190"/>
    </location>
    <ligand>
        <name>NAD(+)</name>
        <dbReference type="ChEBI" id="CHEBI:57540"/>
    </ligand>
</feature>
<feature type="binding site" evidence="1">
    <location>
        <begin position="194"/>
        <end position="197"/>
    </location>
    <ligand>
        <name>7-phospho-2-dehydro-3-deoxy-D-arabino-heptonate</name>
        <dbReference type="ChEBI" id="CHEBI:58394"/>
    </ligand>
</feature>
<feature type="binding site" evidence="1">
    <location>
        <position position="194"/>
    </location>
    <ligand>
        <name>Zn(2+)</name>
        <dbReference type="ChEBI" id="CHEBI:29105"/>
        <note>catalytic</note>
    </ligand>
</feature>
<feature type="binding site" evidence="1">
    <location>
        <position position="250"/>
    </location>
    <ligand>
        <name>7-phospho-2-dehydro-3-deoxy-D-arabino-heptonate</name>
        <dbReference type="ChEBI" id="CHEBI:58394"/>
    </ligand>
</feature>
<feature type="binding site" evidence="1">
    <location>
        <begin position="264"/>
        <end position="268"/>
    </location>
    <ligand>
        <name>7-phospho-2-dehydro-3-deoxy-D-arabino-heptonate</name>
        <dbReference type="ChEBI" id="CHEBI:58394"/>
    </ligand>
</feature>
<feature type="binding site" evidence="1">
    <location>
        <position position="271"/>
    </location>
    <ligand>
        <name>7-phospho-2-dehydro-3-deoxy-D-arabino-heptonate</name>
        <dbReference type="ChEBI" id="CHEBI:58394"/>
    </ligand>
</feature>
<feature type="binding site" evidence="1">
    <location>
        <position position="271"/>
    </location>
    <ligand>
        <name>Zn(2+)</name>
        <dbReference type="ChEBI" id="CHEBI:29105"/>
        <note>catalytic</note>
    </ligand>
</feature>
<feature type="binding site" evidence="1">
    <location>
        <position position="287"/>
    </location>
    <ligand>
        <name>7-phospho-2-dehydro-3-deoxy-D-arabino-heptonate</name>
        <dbReference type="ChEBI" id="CHEBI:58394"/>
    </ligand>
</feature>
<feature type="binding site" evidence="1">
    <location>
        <position position="287"/>
    </location>
    <ligand>
        <name>Zn(2+)</name>
        <dbReference type="ChEBI" id="CHEBI:29105"/>
        <note>catalytic</note>
    </ligand>
</feature>
<feature type="binding site" evidence="1">
    <location>
        <position position="356"/>
    </location>
    <ligand>
        <name>7-phospho-2-dehydro-3-deoxy-D-arabino-heptonate</name>
        <dbReference type="ChEBI" id="CHEBI:58394"/>
    </ligand>
</feature>
<feature type="binding site" evidence="1">
    <location>
        <begin position="871"/>
        <end position="878"/>
    </location>
    <ligand>
        <name>ATP</name>
        <dbReference type="ChEBI" id="CHEBI:30616"/>
    </ligand>
</feature>
<proteinExistence type="inferred from homology"/>
<sequence length="1586" mass="171824">MSEPTKISILGRESIVADFGLWRNFVAKDLISDLSSTTYVLVTDTNLGSLYTPTFQKTFEAAAASITPAPRLLIHHVAPGESSKSRQTKADIEDWMLSQNPPCGRDTVIIALGGGVIGDLIGFVAATYMRGVRFVQVPTTLLAMVDSSIGGKTAIDTPLGKNLIGSIWQPSRIYIDLEFLETLPVREFINGMAEVIKTAAISSEEEFTALEDNADLILAAVRSEPKAGQGRFGGIRDILKARILASARHKAFVVSADEREGGLRNLLNWGHSIGHAIEAILTPQILHGECVAIGMVKEAELARHLGILKGVAVARVVKCISAYGLPTSMKDARVRKLTAGKHCSVDQLLFNMALDKKNDGPKKKVVLLSAIGRTHEPKASVVSNDDIGVVLAPSVEVHPGVPKSLNVTCAPPGSKSISNRALVLAALGSGTCRVKNLLHSDDTEVMLNALERLGAATFSWEEEGEVLVVNGKGGKIIASPTPLYLGNAGTASRFLTTVATLATPSSVDSSVLTGNNRMKQRPIGDLVDALTVNGAGVEYMESKGCLPLKIAASGGFAGGKINLAAKVSSQYVSSLLMCAPYAKEPVTLKLVGGKPISQPYIDMTTAMMRSFGIDVKKSTTEEHTYHIPQGHYVNPAEYIVESDASSATYPLAIAAVTGTTCTVPNIGSKSLQGDARFAVDVLRPMGCSVVQTDTSTTVTGPTDGVLQPLPDVDMEPMTDAFLTASVLAAVAQGKGANHTTRIYGIANQRVKECNRIKAMKDELAKFGVICREHDDGLEIDGIERSSLRQPSGGVFCYDDHRVAFSFSVLSLIAPQSTLILEKECVGKTWPGWWDALKQMFSVNLNGKELAEAEHAASSDEKRSSASVFIIGMRGAGKTTTGNWVAKALDRRFIDLDTELETSEGMTIPDIIKTRGWEGFRDAELAVLKRVLKDHPTGYVFACGGGVVEMPEARKLLTDYHKSKGNVLLIMRDIKLVMDFLQIDKTRPAYVEDMMGVWLRRKPWFQECSNIQYYSQHSTSTELALASEDFTRFMRVVTGQVDSLSLIKKKKHSFFVSLTLPDVEPSGDIITEACVGSDAVELRVDLLKDPAVDGDIPSIDYVNEQMSLLRRRTTLPVIFTIRTKSQGGRFPDDAHDAAMQLYRLAFRCGCEFVDLEIAFPDAMLRAVTEMKGYSKIIASHHDPKGTLSWANMSWIPSYNRALEYGDVIKLVGVANTLDDNNALRKFKTWAEEAHDVPLIAINMGDSGQLSRILNGFMTPVSHPSLPFKAAPGQLSAAEIRRGLSLMGEIKAQKFAIFGSPVSGSRSPALHNTLFAKMGLPHDYSRLETTKVEDVKDFIRAPDFGGASVTIPLKLDIMPLLDEVAQEAEIIGAVNTIVRVSNGNNPPRLIGYNTDWQGMIRCMRNAGVYGSTGSQSAVVIGGGGTARAAIFALHNMGFSPIYVVGRTASKLESMVSTFPTNYNIRVVDNRAQLDTVPQVAIGTIPADRPIDPVMRETLCHMFERAQEIDGTLIGKSSDTSKHRVLLEMAYKPAVTALMQLASDAGWSTIPGLEVLVGQGVHQFVHWTGITPLYHEARVSKHLDYFLSF</sequence>
<evidence type="ECO:0000255" key="1">
    <source>
        <dbReference type="HAMAP-Rule" id="MF_03143"/>
    </source>
</evidence>
<name>ARO1_PENRW</name>
<protein>
    <recommendedName>
        <fullName evidence="1">Pentafunctional AROM polypeptide</fullName>
    </recommendedName>
    <domain>
        <recommendedName>
            <fullName evidence="1">3-dehydroquinate synthase</fullName>
            <shortName evidence="1">DHQS</shortName>
            <ecNumber evidence="1">4.2.3.4</ecNumber>
        </recommendedName>
    </domain>
    <domain>
        <recommendedName>
            <fullName evidence="1">3-phosphoshikimate 1-carboxyvinyltransferase</fullName>
            <ecNumber evidence="1">2.5.1.19</ecNumber>
        </recommendedName>
        <alternativeName>
            <fullName evidence="1">5-enolpyruvylshikimate-3-phosphate synthase</fullName>
            <shortName evidence="1">EPSP synthase</shortName>
            <shortName evidence="1">EPSPS</shortName>
        </alternativeName>
    </domain>
    <domain>
        <recommendedName>
            <fullName evidence="1">Shikimate kinase</fullName>
            <shortName evidence="1">SK</shortName>
            <ecNumber evidence="1">2.7.1.71</ecNumber>
        </recommendedName>
    </domain>
    <domain>
        <recommendedName>
            <fullName evidence="1">3-dehydroquinate dehydratase</fullName>
            <shortName evidence="1">3-dehydroquinase</shortName>
            <ecNumber evidence="1">4.2.1.10</ecNumber>
        </recommendedName>
    </domain>
    <domain>
        <recommendedName>
            <fullName evidence="1">Shikimate dehydrogenase</fullName>
            <ecNumber evidence="1">1.1.1.25</ecNumber>
        </recommendedName>
    </domain>
</protein>
<dbReference type="EC" id="4.2.3.4" evidence="1"/>
<dbReference type="EC" id="2.5.1.19" evidence="1"/>
<dbReference type="EC" id="2.7.1.71" evidence="1"/>
<dbReference type="EC" id="4.2.1.10" evidence="1"/>
<dbReference type="EC" id="1.1.1.25" evidence="1"/>
<dbReference type="EMBL" id="AM920431">
    <property type="protein sequence ID" value="CAP93886.1"/>
    <property type="molecule type" value="Genomic_DNA"/>
</dbReference>
<dbReference type="RefSeq" id="XP_002561515.1">
    <property type="nucleotide sequence ID" value="XM_002561469.1"/>
</dbReference>
<dbReference type="SMR" id="B6HAA7"/>
<dbReference type="STRING" id="500485.B6HAA7"/>
<dbReference type="GeneID" id="8314941"/>
<dbReference type="KEGG" id="pcs:N7525_010542"/>
<dbReference type="VEuPathDB" id="FungiDB:PCH_Pc16g12160"/>
<dbReference type="eggNOG" id="KOG0692">
    <property type="taxonomic scope" value="Eukaryota"/>
</dbReference>
<dbReference type="HOGENOM" id="CLU_001201_1_2_1"/>
<dbReference type="OMA" id="SWANMSW"/>
<dbReference type="OrthoDB" id="197068at2759"/>
<dbReference type="BioCyc" id="PCHR:PC16G12160-MONOMER"/>
<dbReference type="UniPathway" id="UPA00053">
    <property type="reaction ID" value="UER00085"/>
</dbReference>
<dbReference type="UniPathway" id="UPA00053">
    <property type="reaction ID" value="UER00086"/>
</dbReference>
<dbReference type="UniPathway" id="UPA00053">
    <property type="reaction ID" value="UER00087"/>
</dbReference>
<dbReference type="UniPathway" id="UPA00053">
    <property type="reaction ID" value="UER00088"/>
</dbReference>
<dbReference type="UniPathway" id="UPA00053">
    <property type="reaction ID" value="UER00089"/>
</dbReference>
<dbReference type="Proteomes" id="UP000000724">
    <property type="component" value="Contig Pc00c16"/>
</dbReference>
<dbReference type="GO" id="GO:0005737">
    <property type="term" value="C:cytoplasm"/>
    <property type="evidence" value="ECO:0007669"/>
    <property type="project" value="UniProtKB-SubCell"/>
</dbReference>
<dbReference type="GO" id="GO:0003855">
    <property type="term" value="F:3-dehydroquinate dehydratase activity"/>
    <property type="evidence" value="ECO:0007669"/>
    <property type="project" value="UniProtKB-UniRule"/>
</dbReference>
<dbReference type="GO" id="GO:0003856">
    <property type="term" value="F:3-dehydroquinate synthase activity"/>
    <property type="evidence" value="ECO:0007669"/>
    <property type="project" value="UniProtKB-UniRule"/>
</dbReference>
<dbReference type="GO" id="GO:0003866">
    <property type="term" value="F:3-phosphoshikimate 1-carboxyvinyltransferase activity"/>
    <property type="evidence" value="ECO:0007669"/>
    <property type="project" value="UniProtKB-UniRule"/>
</dbReference>
<dbReference type="GO" id="GO:0005524">
    <property type="term" value="F:ATP binding"/>
    <property type="evidence" value="ECO:0007669"/>
    <property type="project" value="UniProtKB-UniRule"/>
</dbReference>
<dbReference type="GO" id="GO:0046872">
    <property type="term" value="F:metal ion binding"/>
    <property type="evidence" value="ECO:0007669"/>
    <property type="project" value="UniProtKB-UniRule"/>
</dbReference>
<dbReference type="GO" id="GO:0004764">
    <property type="term" value="F:shikimate 3-dehydrogenase (NADP+) activity"/>
    <property type="evidence" value="ECO:0007669"/>
    <property type="project" value="UniProtKB-UniRule"/>
</dbReference>
<dbReference type="GO" id="GO:0004765">
    <property type="term" value="F:shikimate kinase activity"/>
    <property type="evidence" value="ECO:0007669"/>
    <property type="project" value="UniProtKB-UniRule"/>
</dbReference>
<dbReference type="GO" id="GO:0008652">
    <property type="term" value="P:amino acid biosynthetic process"/>
    <property type="evidence" value="ECO:0007669"/>
    <property type="project" value="UniProtKB-KW"/>
</dbReference>
<dbReference type="GO" id="GO:0009073">
    <property type="term" value="P:aromatic amino acid family biosynthetic process"/>
    <property type="evidence" value="ECO:0007669"/>
    <property type="project" value="UniProtKB-UniRule"/>
</dbReference>
<dbReference type="GO" id="GO:0009423">
    <property type="term" value="P:chorismate biosynthetic process"/>
    <property type="evidence" value="ECO:0007669"/>
    <property type="project" value="UniProtKB-UniRule"/>
</dbReference>
<dbReference type="CDD" id="cd00502">
    <property type="entry name" value="DHQase_I"/>
    <property type="match status" value="1"/>
</dbReference>
<dbReference type="CDD" id="cd08195">
    <property type="entry name" value="DHQS"/>
    <property type="match status" value="1"/>
</dbReference>
<dbReference type="CDD" id="cd01556">
    <property type="entry name" value="EPSP_synthase"/>
    <property type="match status" value="1"/>
</dbReference>
<dbReference type="CDD" id="cd01065">
    <property type="entry name" value="NAD_bind_Shikimate_DH"/>
    <property type="match status" value="1"/>
</dbReference>
<dbReference type="CDD" id="cd00464">
    <property type="entry name" value="SK"/>
    <property type="match status" value="1"/>
</dbReference>
<dbReference type="FunFam" id="1.20.1090.10:FF:000007">
    <property type="entry name" value="Pentafunctional AROM polypeptide"/>
    <property type="match status" value="1"/>
</dbReference>
<dbReference type="FunFam" id="3.20.20.70:FF:000135">
    <property type="entry name" value="Pentafunctional AROM polypeptide"/>
    <property type="match status" value="1"/>
</dbReference>
<dbReference type="FunFam" id="3.40.50.1970:FF:000007">
    <property type="entry name" value="Pentafunctional AROM polypeptide"/>
    <property type="match status" value="1"/>
</dbReference>
<dbReference type="FunFam" id="3.40.50.300:FF:001256">
    <property type="entry name" value="Pentafunctional AROM polypeptide"/>
    <property type="match status" value="1"/>
</dbReference>
<dbReference type="FunFam" id="3.65.10.10:FF:000007">
    <property type="entry name" value="Pentafunctional AROM polypeptide"/>
    <property type="match status" value="1"/>
</dbReference>
<dbReference type="FunFam" id="3.65.10.10:FF:000008">
    <property type="entry name" value="Pentafunctional AROM polypeptide"/>
    <property type="match status" value="1"/>
</dbReference>
<dbReference type="Gene3D" id="3.40.50.1970">
    <property type="match status" value="1"/>
</dbReference>
<dbReference type="Gene3D" id="3.20.20.70">
    <property type="entry name" value="Aldolase class I"/>
    <property type="match status" value="1"/>
</dbReference>
<dbReference type="Gene3D" id="1.20.1090.10">
    <property type="entry name" value="Dehydroquinate synthase-like - alpha domain"/>
    <property type="match status" value="1"/>
</dbReference>
<dbReference type="Gene3D" id="3.65.10.10">
    <property type="entry name" value="Enolpyruvate transferase domain"/>
    <property type="match status" value="2"/>
</dbReference>
<dbReference type="Gene3D" id="3.40.50.10860">
    <property type="entry name" value="Leucine Dehydrogenase, chain A, domain 1"/>
    <property type="match status" value="1"/>
</dbReference>
<dbReference type="Gene3D" id="3.40.50.720">
    <property type="entry name" value="NAD(P)-binding Rossmann-like Domain"/>
    <property type="match status" value="1"/>
</dbReference>
<dbReference type="Gene3D" id="3.40.50.300">
    <property type="entry name" value="P-loop containing nucleotide triphosphate hydrolases"/>
    <property type="match status" value="1"/>
</dbReference>
<dbReference type="HAMAP" id="MF_00210">
    <property type="entry name" value="EPSP_synth"/>
    <property type="match status" value="1"/>
</dbReference>
<dbReference type="HAMAP" id="MF_03143">
    <property type="entry name" value="Pentafunct_AroM"/>
    <property type="match status" value="1"/>
</dbReference>
<dbReference type="HAMAP" id="MF_00109">
    <property type="entry name" value="Shikimate_kinase"/>
    <property type="match status" value="1"/>
</dbReference>
<dbReference type="InterPro" id="IPR018508">
    <property type="entry name" value="3-dehydroquinate_DH_AS"/>
</dbReference>
<dbReference type="InterPro" id="IPR013785">
    <property type="entry name" value="Aldolase_TIM"/>
</dbReference>
<dbReference type="InterPro" id="IPR046346">
    <property type="entry name" value="Aminoacid_DH-like_N_sf"/>
</dbReference>
<dbReference type="InterPro" id="IPR016037">
    <property type="entry name" value="DHQ_synth_AroB"/>
</dbReference>
<dbReference type="InterPro" id="IPR030960">
    <property type="entry name" value="DHQS/DOIS_N"/>
</dbReference>
<dbReference type="InterPro" id="IPR056179">
    <property type="entry name" value="DHQS_C"/>
</dbReference>
<dbReference type="InterPro" id="IPR001381">
    <property type="entry name" value="DHquinase_I"/>
</dbReference>
<dbReference type="InterPro" id="IPR001986">
    <property type="entry name" value="Enolpyruvate_Tfrase_dom"/>
</dbReference>
<dbReference type="InterPro" id="IPR036968">
    <property type="entry name" value="Enolpyruvate_Tfrase_sf"/>
</dbReference>
<dbReference type="InterPro" id="IPR006264">
    <property type="entry name" value="EPSP_synthase"/>
</dbReference>
<dbReference type="InterPro" id="IPR023193">
    <property type="entry name" value="EPSP_synthase_CS"/>
</dbReference>
<dbReference type="InterPro" id="IPR036291">
    <property type="entry name" value="NAD(P)-bd_dom_sf"/>
</dbReference>
<dbReference type="InterPro" id="IPR027417">
    <property type="entry name" value="P-loop_NTPase"/>
</dbReference>
<dbReference type="InterPro" id="IPR008289">
    <property type="entry name" value="Pentafunct_AroM"/>
</dbReference>
<dbReference type="InterPro" id="IPR013792">
    <property type="entry name" value="RNA3'P_cycl/enolpyr_Trfase_a/b"/>
</dbReference>
<dbReference type="InterPro" id="IPR031322">
    <property type="entry name" value="Shikimate/glucono_kinase"/>
</dbReference>
<dbReference type="InterPro" id="IPR013708">
    <property type="entry name" value="Shikimate_DH-bd_N"/>
</dbReference>
<dbReference type="InterPro" id="IPR010110">
    <property type="entry name" value="Shikimate_DH_AroM-type"/>
</dbReference>
<dbReference type="InterPro" id="IPR000623">
    <property type="entry name" value="Shikimate_kinase/TSH1"/>
</dbReference>
<dbReference type="InterPro" id="IPR023000">
    <property type="entry name" value="Shikimate_kinase_CS"/>
</dbReference>
<dbReference type="NCBIfam" id="TIGR01356">
    <property type="entry name" value="aroA"/>
    <property type="match status" value="1"/>
</dbReference>
<dbReference type="NCBIfam" id="TIGR01357">
    <property type="entry name" value="aroB"/>
    <property type="match status" value="1"/>
</dbReference>
<dbReference type="NCBIfam" id="TIGR01093">
    <property type="entry name" value="aroD"/>
    <property type="match status" value="1"/>
</dbReference>
<dbReference type="NCBIfam" id="TIGR01809">
    <property type="entry name" value="Shik-DH-AROM"/>
    <property type="match status" value="1"/>
</dbReference>
<dbReference type="PANTHER" id="PTHR21090">
    <property type="entry name" value="AROM/DEHYDROQUINATE SYNTHASE"/>
    <property type="match status" value="1"/>
</dbReference>
<dbReference type="PANTHER" id="PTHR21090:SF5">
    <property type="entry name" value="PENTAFUNCTIONAL AROM POLYPEPTIDE"/>
    <property type="match status" value="1"/>
</dbReference>
<dbReference type="Pfam" id="PF01761">
    <property type="entry name" value="DHQ_synthase"/>
    <property type="match status" value="1"/>
</dbReference>
<dbReference type="Pfam" id="PF24621">
    <property type="entry name" value="DHQS_C"/>
    <property type="match status" value="1"/>
</dbReference>
<dbReference type="Pfam" id="PF01487">
    <property type="entry name" value="DHquinase_I"/>
    <property type="match status" value="1"/>
</dbReference>
<dbReference type="Pfam" id="PF00275">
    <property type="entry name" value="EPSP_synthase"/>
    <property type="match status" value="1"/>
</dbReference>
<dbReference type="Pfam" id="PF08501">
    <property type="entry name" value="Shikimate_dh_N"/>
    <property type="match status" value="1"/>
</dbReference>
<dbReference type="Pfam" id="PF01202">
    <property type="entry name" value="SKI"/>
    <property type="match status" value="1"/>
</dbReference>
<dbReference type="PIRSF" id="PIRSF000514">
    <property type="entry name" value="Pentafunct_AroM"/>
    <property type="match status" value="1"/>
</dbReference>
<dbReference type="PRINTS" id="PR01100">
    <property type="entry name" value="SHIKIMTKNASE"/>
</dbReference>
<dbReference type="SUPFAM" id="SSF51569">
    <property type="entry name" value="Aldolase"/>
    <property type="match status" value="1"/>
</dbReference>
<dbReference type="SUPFAM" id="SSF53223">
    <property type="entry name" value="Aminoacid dehydrogenase-like, N-terminal domain"/>
    <property type="match status" value="1"/>
</dbReference>
<dbReference type="SUPFAM" id="SSF56796">
    <property type="entry name" value="Dehydroquinate synthase-like"/>
    <property type="match status" value="1"/>
</dbReference>
<dbReference type="SUPFAM" id="SSF55205">
    <property type="entry name" value="EPT/RTPC-like"/>
    <property type="match status" value="1"/>
</dbReference>
<dbReference type="SUPFAM" id="SSF51735">
    <property type="entry name" value="NAD(P)-binding Rossmann-fold domains"/>
    <property type="match status" value="1"/>
</dbReference>
<dbReference type="SUPFAM" id="SSF52540">
    <property type="entry name" value="P-loop containing nucleoside triphosphate hydrolases"/>
    <property type="match status" value="1"/>
</dbReference>
<dbReference type="PROSITE" id="PS01028">
    <property type="entry name" value="DEHYDROQUINASE_I"/>
    <property type="match status" value="1"/>
</dbReference>
<dbReference type="PROSITE" id="PS00104">
    <property type="entry name" value="EPSP_SYNTHASE_1"/>
    <property type="match status" value="1"/>
</dbReference>
<dbReference type="PROSITE" id="PS00885">
    <property type="entry name" value="EPSP_SYNTHASE_2"/>
    <property type="match status" value="1"/>
</dbReference>
<dbReference type="PROSITE" id="PS01128">
    <property type="entry name" value="SHIKIMATE_KINASE"/>
    <property type="match status" value="1"/>
</dbReference>
<organism>
    <name type="scientific">Penicillium rubens (strain ATCC 28089 / DSM 1075 / NRRL 1951 / Wisconsin 54-1255)</name>
    <name type="common">Penicillium chrysogenum</name>
    <dbReference type="NCBI Taxonomy" id="500485"/>
    <lineage>
        <taxon>Eukaryota</taxon>
        <taxon>Fungi</taxon>
        <taxon>Dikarya</taxon>
        <taxon>Ascomycota</taxon>
        <taxon>Pezizomycotina</taxon>
        <taxon>Eurotiomycetes</taxon>
        <taxon>Eurotiomycetidae</taxon>
        <taxon>Eurotiales</taxon>
        <taxon>Aspergillaceae</taxon>
        <taxon>Penicillium</taxon>
        <taxon>Penicillium chrysogenum species complex</taxon>
    </lineage>
</organism>
<accession>B6HAA7</accession>
<keyword id="KW-0028">Amino-acid biosynthesis</keyword>
<keyword id="KW-0057">Aromatic amino acid biosynthesis</keyword>
<keyword id="KW-0067">ATP-binding</keyword>
<keyword id="KW-0963">Cytoplasm</keyword>
<keyword id="KW-0418">Kinase</keyword>
<keyword id="KW-0456">Lyase</keyword>
<keyword id="KW-0479">Metal-binding</keyword>
<keyword id="KW-0511">Multifunctional enzyme</keyword>
<keyword id="KW-0521">NADP</keyword>
<keyword id="KW-0547">Nucleotide-binding</keyword>
<keyword id="KW-0560">Oxidoreductase</keyword>
<keyword id="KW-1185">Reference proteome</keyword>
<keyword id="KW-0808">Transferase</keyword>
<keyword id="KW-0862">Zinc</keyword>
<gene>
    <name evidence="1" type="primary">aroM</name>
    <name type="ORF">Pc16g12160</name>
</gene>
<comment type="function">
    <text evidence="1">The AROM polypeptide catalyzes 5 consecutive enzymatic reactions in prechorismate polyaromatic amino acid biosynthesis.</text>
</comment>
<comment type="catalytic activity">
    <reaction evidence="1">
        <text>7-phospho-2-dehydro-3-deoxy-D-arabino-heptonate = 3-dehydroquinate + phosphate</text>
        <dbReference type="Rhea" id="RHEA:21968"/>
        <dbReference type="ChEBI" id="CHEBI:32364"/>
        <dbReference type="ChEBI" id="CHEBI:43474"/>
        <dbReference type="ChEBI" id="CHEBI:58394"/>
        <dbReference type="EC" id="4.2.3.4"/>
    </reaction>
</comment>
<comment type="catalytic activity">
    <reaction evidence="1">
        <text>3-dehydroquinate = 3-dehydroshikimate + H2O</text>
        <dbReference type="Rhea" id="RHEA:21096"/>
        <dbReference type="ChEBI" id="CHEBI:15377"/>
        <dbReference type="ChEBI" id="CHEBI:16630"/>
        <dbReference type="ChEBI" id="CHEBI:32364"/>
        <dbReference type="EC" id="4.2.1.10"/>
    </reaction>
</comment>
<comment type="catalytic activity">
    <reaction evidence="1">
        <text>shikimate + NADP(+) = 3-dehydroshikimate + NADPH + H(+)</text>
        <dbReference type="Rhea" id="RHEA:17737"/>
        <dbReference type="ChEBI" id="CHEBI:15378"/>
        <dbReference type="ChEBI" id="CHEBI:16630"/>
        <dbReference type="ChEBI" id="CHEBI:36208"/>
        <dbReference type="ChEBI" id="CHEBI:57783"/>
        <dbReference type="ChEBI" id="CHEBI:58349"/>
        <dbReference type="EC" id="1.1.1.25"/>
    </reaction>
</comment>
<comment type="catalytic activity">
    <reaction evidence="1">
        <text>shikimate + ATP = 3-phosphoshikimate + ADP + H(+)</text>
        <dbReference type="Rhea" id="RHEA:13121"/>
        <dbReference type="ChEBI" id="CHEBI:15378"/>
        <dbReference type="ChEBI" id="CHEBI:30616"/>
        <dbReference type="ChEBI" id="CHEBI:36208"/>
        <dbReference type="ChEBI" id="CHEBI:145989"/>
        <dbReference type="ChEBI" id="CHEBI:456216"/>
        <dbReference type="EC" id="2.7.1.71"/>
    </reaction>
</comment>
<comment type="catalytic activity">
    <reaction evidence="1">
        <text>3-phosphoshikimate + phosphoenolpyruvate = 5-O-(1-carboxyvinyl)-3-phosphoshikimate + phosphate</text>
        <dbReference type="Rhea" id="RHEA:21256"/>
        <dbReference type="ChEBI" id="CHEBI:43474"/>
        <dbReference type="ChEBI" id="CHEBI:57701"/>
        <dbReference type="ChEBI" id="CHEBI:58702"/>
        <dbReference type="ChEBI" id="CHEBI:145989"/>
        <dbReference type="EC" id="2.5.1.19"/>
    </reaction>
</comment>
<comment type="cofactor">
    <cofactor>
        <name>Zn(2+)</name>
        <dbReference type="ChEBI" id="CHEBI:29105"/>
    </cofactor>
    <text>Binds 2 Zn(2+) ions per subunit.</text>
</comment>
<comment type="pathway">
    <text evidence="1">Metabolic intermediate biosynthesis; chorismate biosynthesis; chorismate from D-erythrose 4-phosphate and phosphoenolpyruvate: step 2/7.</text>
</comment>
<comment type="pathway">
    <text evidence="1">Metabolic intermediate biosynthesis; chorismate biosynthesis; chorismate from D-erythrose 4-phosphate and phosphoenolpyruvate: step 3/7.</text>
</comment>
<comment type="pathway">
    <text evidence="1">Metabolic intermediate biosynthesis; chorismate biosynthesis; chorismate from D-erythrose 4-phosphate and phosphoenolpyruvate: step 4/7.</text>
</comment>
<comment type="pathway">
    <text evidence="1">Metabolic intermediate biosynthesis; chorismate biosynthesis; chorismate from D-erythrose 4-phosphate and phosphoenolpyruvate: step 5/7.</text>
</comment>
<comment type="pathway">
    <text evidence="1">Metabolic intermediate biosynthesis; chorismate biosynthesis; chorismate from D-erythrose 4-phosphate and phosphoenolpyruvate: step 6/7.</text>
</comment>
<comment type="subunit">
    <text evidence="1">Homodimer.</text>
</comment>
<comment type="subcellular location">
    <subcellularLocation>
        <location evidence="1">Cytoplasm</location>
    </subcellularLocation>
</comment>
<comment type="similarity">
    <text evidence="1">In the N-terminal section; belongs to the sugar phosphate cyclases superfamily. Dehydroquinate synthase family.</text>
</comment>
<comment type="similarity">
    <text evidence="1">In the 2nd section; belongs to the EPSP synthase family.</text>
</comment>
<comment type="similarity">
    <text evidence="1">In the 3rd section; belongs to the shikimate kinase family.</text>
</comment>
<comment type="similarity">
    <text evidence="1">In the 4th section; belongs to the type-I 3-dehydroquinase family.</text>
</comment>
<comment type="similarity">
    <text evidence="1">In the C-terminal section; belongs to the shikimate dehydrogenase family.</text>
</comment>
<reference key="1">
    <citation type="journal article" date="2008" name="Nat. Biotechnol.">
        <title>Genome sequencing and analysis of the filamentous fungus Penicillium chrysogenum.</title>
        <authorList>
            <person name="van den Berg M.A."/>
            <person name="Albang R."/>
            <person name="Albermann K."/>
            <person name="Badger J.H."/>
            <person name="Daran J.-M."/>
            <person name="Driessen A.J.M."/>
            <person name="Garcia-Estrada C."/>
            <person name="Fedorova N.D."/>
            <person name="Harris D.M."/>
            <person name="Heijne W.H.M."/>
            <person name="Joardar V.S."/>
            <person name="Kiel J.A.K.W."/>
            <person name="Kovalchuk A."/>
            <person name="Martin J.F."/>
            <person name="Nierman W.C."/>
            <person name="Nijland J.G."/>
            <person name="Pronk J.T."/>
            <person name="Roubos J.A."/>
            <person name="van der Klei I.J."/>
            <person name="van Peij N.N.M.E."/>
            <person name="Veenhuis M."/>
            <person name="von Doehren H."/>
            <person name="Wagner C."/>
            <person name="Wortman J.R."/>
            <person name="Bovenberg R.A.L."/>
        </authorList>
    </citation>
    <scope>NUCLEOTIDE SEQUENCE [LARGE SCALE GENOMIC DNA]</scope>
    <source>
        <strain>ATCC 28089 / DSM 1075 / NRRL 1951 / Wisconsin 54-1255</strain>
    </source>
</reference>